<dbReference type="EMBL" id="CH408157">
    <property type="protein sequence ID" value="EDK38582.2"/>
    <property type="molecule type" value="Genomic_DNA"/>
</dbReference>
<dbReference type="RefSeq" id="XP_001484951.1">
    <property type="nucleotide sequence ID" value="XM_001484901.1"/>
</dbReference>
<dbReference type="SMR" id="A5DHC9"/>
<dbReference type="FunCoup" id="A5DHC9">
    <property type="interactions" value="76"/>
</dbReference>
<dbReference type="STRING" id="294746.A5DHC9"/>
<dbReference type="GeneID" id="5126653"/>
<dbReference type="KEGG" id="pgu:PGUG_02680"/>
<dbReference type="eggNOG" id="ENOG502S8A5">
    <property type="taxonomic scope" value="Eukaryota"/>
</dbReference>
<dbReference type="HOGENOM" id="CLU_070610_2_0_1"/>
<dbReference type="InParanoid" id="A5DHC9"/>
<dbReference type="OMA" id="QWFMTNV"/>
<dbReference type="OrthoDB" id="10254720at2759"/>
<dbReference type="Proteomes" id="UP000001997">
    <property type="component" value="Unassembled WGS sequence"/>
</dbReference>
<dbReference type="GO" id="GO:0010008">
    <property type="term" value="C:endosome membrane"/>
    <property type="evidence" value="ECO:0007669"/>
    <property type="project" value="UniProtKB-SubCell"/>
</dbReference>
<dbReference type="GO" id="GO:0005774">
    <property type="term" value="C:vacuolar membrane"/>
    <property type="evidence" value="ECO:0007669"/>
    <property type="project" value="UniProtKB-SubCell"/>
</dbReference>
<dbReference type="GO" id="GO:0032266">
    <property type="term" value="F:phosphatidylinositol-3-phosphate binding"/>
    <property type="evidence" value="ECO:0007669"/>
    <property type="project" value="InterPro"/>
</dbReference>
<dbReference type="GO" id="GO:0030674">
    <property type="term" value="F:protein-macromolecule adaptor activity"/>
    <property type="evidence" value="ECO:0000250"/>
    <property type="project" value="UniProtKB"/>
</dbReference>
<dbReference type="GO" id="GO:0072657">
    <property type="term" value="P:protein localization to membrane"/>
    <property type="evidence" value="ECO:0000250"/>
    <property type="project" value="UniProtKB"/>
</dbReference>
<dbReference type="CDD" id="cd07280">
    <property type="entry name" value="PX_YPT35"/>
    <property type="match status" value="1"/>
</dbReference>
<dbReference type="Gene3D" id="3.30.1520.10">
    <property type="entry name" value="Phox-like domain"/>
    <property type="match status" value="1"/>
</dbReference>
<dbReference type="InterPro" id="IPR001683">
    <property type="entry name" value="PX_dom"/>
</dbReference>
<dbReference type="InterPro" id="IPR036871">
    <property type="entry name" value="PX_dom_sf"/>
</dbReference>
<dbReference type="InterPro" id="IPR037917">
    <property type="entry name" value="Ypt35_PX"/>
</dbReference>
<dbReference type="Pfam" id="PF00787">
    <property type="entry name" value="PX"/>
    <property type="match status" value="1"/>
</dbReference>
<dbReference type="SMART" id="SM00312">
    <property type="entry name" value="PX"/>
    <property type="match status" value="1"/>
</dbReference>
<dbReference type="SUPFAM" id="SSF64268">
    <property type="entry name" value="PX domain"/>
    <property type="match status" value="1"/>
</dbReference>
<dbReference type="PROSITE" id="PS50195">
    <property type="entry name" value="PX"/>
    <property type="match status" value="1"/>
</dbReference>
<gene>
    <name type="primary">YPT35</name>
    <name type="ORF">PGUG_02680</name>
</gene>
<feature type="chain" id="PRO_0000333495" description="Endosomal/vacuolar adapter protein YPT35">
    <location>
        <begin position="1"/>
        <end position="145"/>
    </location>
</feature>
<feature type="domain" description="PX" evidence="2">
    <location>
        <begin position="32"/>
        <end position="145"/>
    </location>
</feature>
<keyword id="KW-0967">Endosome</keyword>
<keyword id="KW-0472">Membrane</keyword>
<keyword id="KW-1185">Reference proteome</keyword>
<keyword id="KW-0926">Vacuole</keyword>
<accession>A5DHC9</accession>
<reference key="1">
    <citation type="journal article" date="2009" name="Nature">
        <title>Evolution of pathogenicity and sexual reproduction in eight Candida genomes.</title>
        <authorList>
            <person name="Butler G."/>
            <person name="Rasmussen M.D."/>
            <person name="Lin M.F."/>
            <person name="Santos M.A.S."/>
            <person name="Sakthikumar S."/>
            <person name="Munro C.A."/>
            <person name="Rheinbay E."/>
            <person name="Grabherr M."/>
            <person name="Forche A."/>
            <person name="Reedy J.L."/>
            <person name="Agrafioti I."/>
            <person name="Arnaud M.B."/>
            <person name="Bates S."/>
            <person name="Brown A.J.P."/>
            <person name="Brunke S."/>
            <person name="Costanzo M.C."/>
            <person name="Fitzpatrick D.A."/>
            <person name="de Groot P.W.J."/>
            <person name="Harris D."/>
            <person name="Hoyer L.L."/>
            <person name="Hube B."/>
            <person name="Klis F.M."/>
            <person name="Kodira C."/>
            <person name="Lennard N."/>
            <person name="Logue M.E."/>
            <person name="Martin R."/>
            <person name="Neiman A.M."/>
            <person name="Nikolaou E."/>
            <person name="Quail M.A."/>
            <person name="Quinn J."/>
            <person name="Santos M.C."/>
            <person name="Schmitzberger F.F."/>
            <person name="Sherlock G."/>
            <person name="Shah P."/>
            <person name="Silverstein K.A.T."/>
            <person name="Skrzypek M.S."/>
            <person name="Soll D."/>
            <person name="Staggs R."/>
            <person name="Stansfield I."/>
            <person name="Stumpf M.P.H."/>
            <person name="Sudbery P.E."/>
            <person name="Srikantha T."/>
            <person name="Zeng Q."/>
            <person name="Berman J."/>
            <person name="Berriman M."/>
            <person name="Heitman J."/>
            <person name="Gow N.A.R."/>
            <person name="Lorenz M.C."/>
            <person name="Birren B.W."/>
            <person name="Kellis M."/>
            <person name="Cuomo C.A."/>
        </authorList>
    </citation>
    <scope>NUCLEOTIDE SEQUENCE [LARGE SCALE GENOMIC DNA]</scope>
    <source>
        <strain>ATCC 6260 / CBS 566 / DSM 6381 / JCM 1539 / NBRC 10279 / NRRL Y-324</strain>
    </source>
</reference>
<name>YPT35_PICGU</name>
<proteinExistence type="inferred from homology"/>
<comment type="function">
    <text evidence="1">Recruits the lipid transfer protein VPS13 to endosomal and vacuolar membranes.</text>
</comment>
<comment type="subcellular location">
    <subcellularLocation>
        <location evidence="1">Endosome membrane</location>
        <topology evidence="1">Peripheral membrane protein</topology>
    </subcellularLocation>
    <subcellularLocation>
        <location evidence="1">Vacuole membrane</location>
        <topology evidence="1">Peripheral membrane protein</topology>
    </subcellularLocation>
</comment>
<comment type="domain">
    <text evidence="1">The PX domain binds phosphatidylinositol 3-phosphate (PtdIns(3)P) which is necessary for peripheral membrane localization.</text>
</comment>
<comment type="similarity">
    <text evidence="3">Belongs to the YPT35 family.</text>
</comment>
<organism>
    <name type="scientific">Meyerozyma guilliermondii (strain ATCC 6260 / CBS 566 / DSM 6381 / JCM 1539 / NBRC 10279 / NRRL Y-324)</name>
    <name type="common">Yeast</name>
    <name type="synonym">Candida guilliermondii</name>
    <dbReference type="NCBI Taxonomy" id="294746"/>
    <lineage>
        <taxon>Eukaryota</taxon>
        <taxon>Fungi</taxon>
        <taxon>Dikarya</taxon>
        <taxon>Ascomycota</taxon>
        <taxon>Saccharomycotina</taxon>
        <taxon>Pichiomycetes</taxon>
        <taxon>Debaryomycetaceae</taxon>
        <taxon>Meyerozyma</taxon>
    </lineage>
</organism>
<protein>
    <recommendedName>
        <fullName evidence="3">Endosomal/vacuolar adapter protein YPT35</fullName>
    </recommendedName>
    <alternativeName>
        <fullName evidence="3">PX domain-containing protein YPT35</fullName>
    </alternativeName>
</protein>
<evidence type="ECO:0000250" key="1">
    <source>
        <dbReference type="UniProtKB" id="P38815"/>
    </source>
</evidence>
<evidence type="ECO:0000255" key="2">
    <source>
        <dbReference type="PROSITE-ProRule" id="PRU00147"/>
    </source>
</evidence>
<evidence type="ECO:0000305" key="3"/>
<sequence>MVANTSMRLNQVAPVPIQLEDHGPNQLEPTHISDVLVGEHHTIKGENGQSYVVWAIRIIVNDSIYSSIVLYKRYREMEAFRNKLLDEFGNEIPPLPPKDSMSLQKLTNPLAWLEERRKGLQWFMTNVLLNPRWQRSTVVREFVLG</sequence>